<dbReference type="EMBL" id="HG315671">
    <property type="protein sequence ID" value="CDF79904.1"/>
    <property type="molecule type" value="Genomic_DNA"/>
</dbReference>
<dbReference type="SMR" id="T2KPJ3"/>
<dbReference type="STRING" id="1347342.BN863_21920"/>
<dbReference type="PATRIC" id="fig|1347342.6.peg.2199"/>
<dbReference type="eggNOG" id="COG4771">
    <property type="taxonomic scope" value="Bacteria"/>
</dbReference>
<dbReference type="HOGENOM" id="CLU_004317_0_2_10"/>
<dbReference type="OrthoDB" id="9768177at2"/>
<dbReference type="Proteomes" id="UP000016160">
    <property type="component" value="Chromosome"/>
</dbReference>
<dbReference type="GO" id="GO:0009279">
    <property type="term" value="C:cell outer membrane"/>
    <property type="evidence" value="ECO:0007669"/>
    <property type="project" value="UniProtKB-SubCell"/>
</dbReference>
<dbReference type="Gene3D" id="2.60.40.1120">
    <property type="entry name" value="Carboxypeptidase-like, regulatory domain"/>
    <property type="match status" value="1"/>
</dbReference>
<dbReference type="Gene3D" id="2.40.170.20">
    <property type="entry name" value="TonB-dependent receptor, beta-barrel domain"/>
    <property type="match status" value="1"/>
</dbReference>
<dbReference type="Gene3D" id="2.170.130.10">
    <property type="entry name" value="TonB-dependent receptor, plug domain"/>
    <property type="match status" value="1"/>
</dbReference>
<dbReference type="InterPro" id="IPR008969">
    <property type="entry name" value="CarboxyPept-like_regulatory"/>
</dbReference>
<dbReference type="InterPro" id="IPR012910">
    <property type="entry name" value="Plug_dom"/>
</dbReference>
<dbReference type="InterPro" id="IPR037066">
    <property type="entry name" value="Plug_dom_sf"/>
</dbReference>
<dbReference type="InterPro" id="IPR023996">
    <property type="entry name" value="TonB-dep_OMP_SusC/RagA"/>
</dbReference>
<dbReference type="InterPro" id="IPR023997">
    <property type="entry name" value="TonB-dep_OMP_SusC/RagA_CS"/>
</dbReference>
<dbReference type="InterPro" id="IPR039426">
    <property type="entry name" value="TonB-dep_rcpt-like"/>
</dbReference>
<dbReference type="InterPro" id="IPR000531">
    <property type="entry name" value="TonB-dep_rcpt_b-brl"/>
</dbReference>
<dbReference type="InterPro" id="IPR036942">
    <property type="entry name" value="TonB_rcpt_b-brl_sf"/>
</dbReference>
<dbReference type="NCBIfam" id="TIGR04056">
    <property type="entry name" value="OMP_RagA_SusC"/>
    <property type="match status" value="1"/>
</dbReference>
<dbReference type="NCBIfam" id="TIGR04057">
    <property type="entry name" value="SusC_RagA_signa"/>
    <property type="match status" value="1"/>
</dbReference>
<dbReference type="Pfam" id="PF13715">
    <property type="entry name" value="CarbopepD_reg_2"/>
    <property type="match status" value="1"/>
</dbReference>
<dbReference type="Pfam" id="PF07715">
    <property type="entry name" value="Plug"/>
    <property type="match status" value="1"/>
</dbReference>
<dbReference type="Pfam" id="PF00593">
    <property type="entry name" value="TonB_dep_Rec_b-barrel"/>
    <property type="match status" value="1"/>
</dbReference>
<dbReference type="SUPFAM" id="SSF49464">
    <property type="entry name" value="Carboxypeptidase regulatory domain-like"/>
    <property type="match status" value="1"/>
</dbReference>
<dbReference type="SUPFAM" id="SSF56935">
    <property type="entry name" value="Porins"/>
    <property type="match status" value="1"/>
</dbReference>
<dbReference type="PROSITE" id="PS52016">
    <property type="entry name" value="TONB_DEPENDENT_REC_3"/>
    <property type="match status" value="1"/>
</dbReference>
<name>PLH3_FORAG</name>
<sequence length="1001" mass="109272">MTTKNNKQLKSVLFMFLLLIGAYVKAQEKNVSGTVTSSEDGMMLPGVNIIVKGTASGTTSDFDGNYNIEVPDSNAILQFNYLGFVTQEIKVGAQTNISVVLQVDQNELEEIVVIGYGTVKKSDVSGSVSSVKSAELTAYPTVSAEQALQGRAAGVQVQSNNGGEPGAPIKVRIRGGTSINASSDALIVVDGFVGASMPAPQDIASMEVLKDASATAIYGSRGANGVIMVTTKKGTSSKPTLELNTSYSLQHVNNTIDLLDADEFATYRQAYSENYVQGPANTDWQDEIYTTGSISNTQLAFSGGSDNSKYYISGNYFAQDGVVINSNLERFTILSNVDVDITKRFKVGLNVFGGRSTKDGVSTQAQTGGTGGGDVISSAYRFAPDLGIYNADGTYTINSLGDDIDNPYALATESVDERKADTYRANFYAAYEFIDGLEFKTTFGFSSENTQIGKFKPTTILAGAGVGGEATFEYRNTTNTLSENYLTYNKSFGAHNLSLLGGYSYQKVQNEGAFAGARSFVTNEVSYRNLEGGAVTMQPSSYLNETELVSVFGRVNYEYASKYIFTFTARRDGSSNFSKNNKYAFFPSGAIAWNMAKENFLKDSNTITTWKWRASYGATGNPSISPYETLAKFSSVYAVVGDQQVNGVVLTDFANDNLKWETSKQLDLGLDVALFDNRLELSFDYYTIKTEDLLFPRPLPEYSGVSSQIQNIGELENKGYEFSINSRNITNQDFTWSTAFNFSRNKNKMVKLPDGDDLFIDSAPGHFLQRQTQILREGEAIGSFYGYEYKGVYQGGNFPEGTATLSGDSDPGGELFADLDGNGEISTADRKIIGDPTPDFTMGFNNDLRYKNFDMNLFFQASVGGEILNYTLLELGSGAANSTADMVNAWSPTNTNTDVPRPAVREKRITSRYVYDGSYVRLKNLSFGYNLPESFLGKTGLQTVRLYVSGQNLLTFTDYPGADPEANYRNDNNQRSNTNIGLDYGSYPNVRTFTMGLNMKF</sequence>
<evidence type="ECO:0000250" key="1">
    <source>
        <dbReference type="UniProtKB" id="Q8A1G2"/>
    </source>
</evidence>
<evidence type="ECO:0000255" key="2"/>
<evidence type="ECO:0000255" key="3">
    <source>
        <dbReference type="PROSITE-ProRule" id="PRU01360"/>
    </source>
</evidence>
<evidence type="ECO:0000269" key="4">
    <source>
    </source>
</evidence>
<evidence type="ECO:0000303" key="5">
    <source>
    </source>
</evidence>
<evidence type="ECO:0000305" key="6"/>
<evidence type="ECO:0000305" key="7">
    <source>
    </source>
</evidence>
<keyword id="KW-0998">Cell outer membrane</keyword>
<keyword id="KW-0472">Membrane</keyword>
<keyword id="KW-0675">Receptor</keyword>
<keyword id="KW-1185">Reference proteome</keyword>
<keyword id="KW-0732">Signal</keyword>
<keyword id="KW-0798">TonB box</keyword>
<keyword id="KW-0812">Transmembrane</keyword>
<keyword id="KW-1134">Transmembrane beta strand</keyword>
<keyword id="KW-0813">Transport</keyword>
<comment type="function">
    <text evidence="1 7">TonB-dependent receptor probably involved in ulvan degradation (Probable). Ulvan is the main polysaccharide component of the Ulvales (green seaweed) cell wall. It is composed of disaccharide building blocks comprising 3-sulfated rhamnose (Rha3S) linked to D-glucuronic acid (GlcA), L-iduronic acid (IduA), or D-xylose (Xyl) (Probable). The TonB-dependent receptor may mediate transport of ulvan oligosaccharides from the surface of the outer membrane to the periplasm for subsequent degradation (By similarity).</text>
</comment>
<comment type="subcellular location">
    <subcellularLocation>
        <location evidence="1 3">Cell outer membrane</location>
        <topology evidence="1 3">Multi-pass membrane protein</topology>
    </subcellularLocation>
</comment>
<comment type="induction">
    <text evidence="4">By ulvan and rhamnose.</text>
</comment>
<comment type="similarity">
    <text evidence="6">Belongs to the TonB-dependent receptor family.</text>
</comment>
<proteinExistence type="evidence at transcript level"/>
<accession>T2KPJ3</accession>
<feature type="signal peptide" evidence="2">
    <location>
        <begin position="1"/>
        <end position="26"/>
    </location>
</feature>
<feature type="chain" id="PRO_5004602761" description="TonB-dependent receptor P3">
    <location>
        <begin position="27"/>
        <end position="1001"/>
    </location>
</feature>
<feature type="domain" description="TBDR plug" evidence="3">
    <location>
        <begin position="120"/>
        <end position="232"/>
    </location>
</feature>
<feature type="domain" description="TBDR beta-barrel" evidence="3">
    <location>
        <begin position="238"/>
        <end position="1001"/>
    </location>
</feature>
<feature type="short sequence motif" description="TonB box" evidence="2">
    <location>
        <begin position="109"/>
        <end position="116"/>
    </location>
</feature>
<feature type="short sequence motif" description="TonB C-terminal box" evidence="2">
    <location>
        <begin position="984"/>
        <end position="1001"/>
    </location>
</feature>
<reference key="1">
    <citation type="journal article" date="2013" name="Appl. Environ. Microbiol.">
        <title>The genome of the alga-associated marine flavobacterium Formosa agariphila KMM 3901T reveals a broad potential for degradation of algal polysaccharides.</title>
        <authorList>
            <person name="Mann A.J."/>
            <person name="Hahnke R.L."/>
            <person name="Huang S."/>
            <person name="Werner J."/>
            <person name="Xing P."/>
            <person name="Barbeyron T."/>
            <person name="Huettel B."/>
            <person name="Stueber K."/>
            <person name="Reinhardt R."/>
            <person name="Harder J."/>
            <person name="Gloeckner F.O."/>
            <person name="Amann R.I."/>
            <person name="Teeling H."/>
        </authorList>
    </citation>
    <scope>NUCLEOTIDE SEQUENCE [LARGE SCALE GENOMIC DNA]</scope>
    <source>
        <strain>DSM 15362 / KCTC 12365 / LMG 23005 / KMM 3901 / M-2Alg 35-1</strain>
    </source>
</reference>
<reference key="2">
    <citation type="journal article" date="2019" name="Nat. Chem. Biol.">
        <title>A marine bacterial enzymatic cascade degrades the algal polysaccharide ulvan.</title>
        <authorList>
            <person name="Reisky L."/>
            <person name="Prechoux A."/>
            <person name="Zuehlke M.K."/>
            <person name="Baeumgen M."/>
            <person name="Robb C.S."/>
            <person name="Gerlach N."/>
            <person name="Roret T."/>
            <person name="Stanetty C."/>
            <person name="Larocque R."/>
            <person name="Michel G."/>
            <person name="Song T."/>
            <person name="Markert S."/>
            <person name="Unfried F."/>
            <person name="Mihovilovic M.D."/>
            <person name="Trautwein-Schult A."/>
            <person name="Becher D."/>
            <person name="Schweder T."/>
            <person name="Bornscheuer U.T."/>
            <person name="Hehemann J.H."/>
        </authorList>
    </citation>
    <scope>FUNCTION</scope>
    <scope>INDUCTION</scope>
</reference>
<protein>
    <recommendedName>
        <fullName evidence="5">TonB-dependent receptor P3</fullName>
        <shortName evidence="5">P3_TBDR</shortName>
    </recommendedName>
    <alternativeName>
        <fullName evidence="5">Polysaccharide utilization locus H protein P3</fullName>
        <shortName>PUL H protein P3</shortName>
    </alternativeName>
</protein>
<organism>
    <name type="scientific">Formosa agariphila (strain DSM 15362 / KCTC 12365 / LMG 23005 / KMM 3901 / M-2Alg 35-1)</name>
    <dbReference type="NCBI Taxonomy" id="1347342"/>
    <lineage>
        <taxon>Bacteria</taxon>
        <taxon>Pseudomonadati</taxon>
        <taxon>Bacteroidota</taxon>
        <taxon>Flavobacteriia</taxon>
        <taxon>Flavobacteriales</taxon>
        <taxon>Flavobacteriaceae</taxon>
        <taxon>Formosa</taxon>
    </lineage>
</organism>
<gene>
    <name type="ORF">BN863_21920</name>
</gene>